<proteinExistence type="inferred from homology"/>
<accession>Q3B0X8</accession>
<comment type="function">
    <text evidence="1">Cell wall formation.</text>
</comment>
<comment type="catalytic activity">
    <reaction evidence="1">
        <text>UDP-N-acetyl-alpha-D-muramate + L-alanine + ATP = UDP-N-acetyl-alpha-D-muramoyl-L-alanine + ADP + phosphate + H(+)</text>
        <dbReference type="Rhea" id="RHEA:23372"/>
        <dbReference type="ChEBI" id="CHEBI:15378"/>
        <dbReference type="ChEBI" id="CHEBI:30616"/>
        <dbReference type="ChEBI" id="CHEBI:43474"/>
        <dbReference type="ChEBI" id="CHEBI:57972"/>
        <dbReference type="ChEBI" id="CHEBI:70757"/>
        <dbReference type="ChEBI" id="CHEBI:83898"/>
        <dbReference type="ChEBI" id="CHEBI:456216"/>
        <dbReference type="EC" id="6.3.2.8"/>
    </reaction>
</comment>
<comment type="pathway">
    <text evidence="1">Cell wall biogenesis; peptidoglycan biosynthesis.</text>
</comment>
<comment type="subcellular location">
    <subcellularLocation>
        <location evidence="1">Cytoplasm</location>
    </subcellularLocation>
</comment>
<comment type="similarity">
    <text evidence="1">Belongs to the MurCDEF family.</text>
</comment>
<gene>
    <name evidence="1" type="primary">murC</name>
    <name type="ordered locus">Syncc9902_0025</name>
</gene>
<reference key="1">
    <citation type="submission" date="2005-08" db="EMBL/GenBank/DDBJ databases">
        <title>Complete sequence of Synechococcus sp. CC9902.</title>
        <authorList>
            <person name="Copeland A."/>
            <person name="Lucas S."/>
            <person name="Lapidus A."/>
            <person name="Barry K."/>
            <person name="Detter J.C."/>
            <person name="Glavina T."/>
            <person name="Hammon N."/>
            <person name="Israni S."/>
            <person name="Pitluck S."/>
            <person name="Martinez M."/>
            <person name="Schmutz J."/>
            <person name="Larimer F."/>
            <person name="Land M."/>
            <person name="Kyrpides N."/>
            <person name="Ivanova N."/>
            <person name="Richardson P."/>
        </authorList>
    </citation>
    <scope>NUCLEOTIDE SEQUENCE [LARGE SCALE GENOMIC DNA]</scope>
    <source>
        <strain>CC9902</strain>
    </source>
</reference>
<protein>
    <recommendedName>
        <fullName evidence="1">UDP-N-acetylmuramate--L-alanine ligase</fullName>
        <ecNumber evidence="1">6.3.2.8</ecNumber>
    </recommendedName>
    <alternativeName>
        <fullName evidence="1">UDP-N-acetylmuramoyl-L-alanine synthetase</fullName>
    </alternativeName>
</protein>
<organism>
    <name type="scientific">Synechococcus sp. (strain CC9902)</name>
    <dbReference type="NCBI Taxonomy" id="316279"/>
    <lineage>
        <taxon>Bacteria</taxon>
        <taxon>Bacillati</taxon>
        <taxon>Cyanobacteriota</taxon>
        <taxon>Cyanophyceae</taxon>
        <taxon>Synechococcales</taxon>
        <taxon>Synechococcaceae</taxon>
        <taxon>Synechococcus</taxon>
    </lineage>
</organism>
<dbReference type="EC" id="6.3.2.8" evidence="1"/>
<dbReference type="EMBL" id="CP000097">
    <property type="protein sequence ID" value="ABB25000.1"/>
    <property type="molecule type" value="Genomic_DNA"/>
</dbReference>
<dbReference type="RefSeq" id="WP_011358870.1">
    <property type="nucleotide sequence ID" value="NC_007513.1"/>
</dbReference>
<dbReference type="SMR" id="Q3B0X8"/>
<dbReference type="STRING" id="316279.Syncc9902_0025"/>
<dbReference type="KEGG" id="sye:Syncc9902_0025"/>
<dbReference type="eggNOG" id="COG0773">
    <property type="taxonomic scope" value="Bacteria"/>
</dbReference>
<dbReference type="HOGENOM" id="CLU_028104_2_2_3"/>
<dbReference type="OrthoDB" id="9804126at2"/>
<dbReference type="UniPathway" id="UPA00219"/>
<dbReference type="Proteomes" id="UP000002712">
    <property type="component" value="Chromosome"/>
</dbReference>
<dbReference type="GO" id="GO:0005737">
    <property type="term" value="C:cytoplasm"/>
    <property type="evidence" value="ECO:0007669"/>
    <property type="project" value="UniProtKB-SubCell"/>
</dbReference>
<dbReference type="GO" id="GO:0005524">
    <property type="term" value="F:ATP binding"/>
    <property type="evidence" value="ECO:0007669"/>
    <property type="project" value="UniProtKB-UniRule"/>
</dbReference>
<dbReference type="GO" id="GO:0008763">
    <property type="term" value="F:UDP-N-acetylmuramate-L-alanine ligase activity"/>
    <property type="evidence" value="ECO:0007669"/>
    <property type="project" value="UniProtKB-UniRule"/>
</dbReference>
<dbReference type="GO" id="GO:0051301">
    <property type="term" value="P:cell division"/>
    <property type="evidence" value="ECO:0007669"/>
    <property type="project" value="UniProtKB-KW"/>
</dbReference>
<dbReference type="GO" id="GO:0071555">
    <property type="term" value="P:cell wall organization"/>
    <property type="evidence" value="ECO:0007669"/>
    <property type="project" value="UniProtKB-KW"/>
</dbReference>
<dbReference type="GO" id="GO:0009252">
    <property type="term" value="P:peptidoglycan biosynthetic process"/>
    <property type="evidence" value="ECO:0007669"/>
    <property type="project" value="UniProtKB-UniRule"/>
</dbReference>
<dbReference type="GO" id="GO:0008360">
    <property type="term" value="P:regulation of cell shape"/>
    <property type="evidence" value="ECO:0007669"/>
    <property type="project" value="UniProtKB-KW"/>
</dbReference>
<dbReference type="Gene3D" id="3.90.190.20">
    <property type="entry name" value="Mur ligase, C-terminal domain"/>
    <property type="match status" value="1"/>
</dbReference>
<dbReference type="Gene3D" id="3.40.1190.10">
    <property type="entry name" value="Mur-like, catalytic domain"/>
    <property type="match status" value="1"/>
</dbReference>
<dbReference type="Gene3D" id="3.40.50.720">
    <property type="entry name" value="NAD(P)-binding Rossmann-like Domain"/>
    <property type="match status" value="1"/>
</dbReference>
<dbReference type="HAMAP" id="MF_00046">
    <property type="entry name" value="MurC"/>
    <property type="match status" value="1"/>
</dbReference>
<dbReference type="InterPro" id="IPR036565">
    <property type="entry name" value="Mur-like_cat_sf"/>
</dbReference>
<dbReference type="InterPro" id="IPR004101">
    <property type="entry name" value="Mur_ligase_C"/>
</dbReference>
<dbReference type="InterPro" id="IPR036615">
    <property type="entry name" value="Mur_ligase_C_dom_sf"/>
</dbReference>
<dbReference type="InterPro" id="IPR013221">
    <property type="entry name" value="Mur_ligase_cen"/>
</dbReference>
<dbReference type="InterPro" id="IPR000713">
    <property type="entry name" value="Mur_ligase_N"/>
</dbReference>
<dbReference type="InterPro" id="IPR050061">
    <property type="entry name" value="MurCDEF_pg_biosynth"/>
</dbReference>
<dbReference type="InterPro" id="IPR005758">
    <property type="entry name" value="UDP-N-AcMur_Ala_ligase_MurC"/>
</dbReference>
<dbReference type="NCBIfam" id="TIGR01082">
    <property type="entry name" value="murC"/>
    <property type="match status" value="1"/>
</dbReference>
<dbReference type="PANTHER" id="PTHR43445:SF3">
    <property type="entry name" value="UDP-N-ACETYLMURAMATE--L-ALANINE LIGASE"/>
    <property type="match status" value="1"/>
</dbReference>
<dbReference type="PANTHER" id="PTHR43445">
    <property type="entry name" value="UDP-N-ACETYLMURAMATE--L-ALANINE LIGASE-RELATED"/>
    <property type="match status" value="1"/>
</dbReference>
<dbReference type="Pfam" id="PF01225">
    <property type="entry name" value="Mur_ligase"/>
    <property type="match status" value="1"/>
</dbReference>
<dbReference type="Pfam" id="PF02875">
    <property type="entry name" value="Mur_ligase_C"/>
    <property type="match status" value="1"/>
</dbReference>
<dbReference type="Pfam" id="PF08245">
    <property type="entry name" value="Mur_ligase_M"/>
    <property type="match status" value="1"/>
</dbReference>
<dbReference type="SUPFAM" id="SSF51984">
    <property type="entry name" value="MurCD N-terminal domain"/>
    <property type="match status" value="1"/>
</dbReference>
<dbReference type="SUPFAM" id="SSF53623">
    <property type="entry name" value="MurD-like peptide ligases, catalytic domain"/>
    <property type="match status" value="1"/>
</dbReference>
<dbReference type="SUPFAM" id="SSF53244">
    <property type="entry name" value="MurD-like peptide ligases, peptide-binding domain"/>
    <property type="match status" value="1"/>
</dbReference>
<feature type="chain" id="PRO_0000242607" description="UDP-N-acetylmuramate--L-alanine ligase">
    <location>
        <begin position="1"/>
        <end position="468"/>
    </location>
</feature>
<feature type="binding site" evidence="1">
    <location>
        <begin position="122"/>
        <end position="128"/>
    </location>
    <ligand>
        <name>ATP</name>
        <dbReference type="ChEBI" id="CHEBI:30616"/>
    </ligand>
</feature>
<name>MURC_SYNS9</name>
<evidence type="ECO:0000255" key="1">
    <source>
        <dbReference type="HAMAP-Rule" id="MF_00046"/>
    </source>
</evidence>
<sequence length="468" mass="50519">MPRLLTPQTPVHFIGVGGIGMSALAKILVDRGHPVSGSDPRDNPTVQHLESRGVTVFKEQTAECIQSVLATNQQPPVVVISTAIPDTNPELENARAHQLAIWHRSDLLAALIDQQASIAVAGSHGKTTTSTLITTLLIEAGEDPTAVIGGVVPCLGSNGHSGQGRLLVAEADESDGSLVKFRPSLGVITNLELDHTDHYDGLDDLISTLQRFGGGCERLIANYDDPILQEHFEPTAWWSNKQSENIAFAALPLQLDGDRCTARFYENGSAVGDFTLPMAGLHNLSNATAALAACRMEGIPFEALVEGLAQLQAPGRRFDLRGTWEGRHIVDDYAHHPSEVRATLTMAQLMVSSGRSPLPSPPQRLVAVFQPHRFSRTQQFFEAFAEALQNCDALLLAPVYAAGEQTIPGVCSNALAQRIRSLRPDLEIEVAENLNQLTDLVKQRSRPDDLVLAMGAGTVNSLWGRLTE</sequence>
<keyword id="KW-0067">ATP-binding</keyword>
<keyword id="KW-0131">Cell cycle</keyword>
<keyword id="KW-0132">Cell division</keyword>
<keyword id="KW-0133">Cell shape</keyword>
<keyword id="KW-0961">Cell wall biogenesis/degradation</keyword>
<keyword id="KW-0963">Cytoplasm</keyword>
<keyword id="KW-0436">Ligase</keyword>
<keyword id="KW-0547">Nucleotide-binding</keyword>
<keyword id="KW-0573">Peptidoglycan synthesis</keyword>
<keyword id="KW-1185">Reference proteome</keyword>